<proteinExistence type="inferred from homology"/>
<comment type="function">
    <text evidence="1">Catalyzes the phosphorylation of D-glycero-D-manno-heptose 7-phosphate at the C-1 position to selectively form D-glycero-beta-D-manno-heptose-1,7-bisphosphate.</text>
</comment>
<comment type="function">
    <text evidence="1">Catalyzes the ADP transfer from ATP to D-glycero-beta-D-manno-heptose 1-phosphate, yielding ADP-D-glycero-beta-D-manno-heptose.</text>
</comment>
<comment type="catalytic activity">
    <reaction evidence="1">
        <text>D-glycero-beta-D-manno-heptose 7-phosphate + ATP = D-glycero-beta-D-manno-heptose 1,7-bisphosphate + ADP + H(+)</text>
        <dbReference type="Rhea" id="RHEA:27473"/>
        <dbReference type="ChEBI" id="CHEBI:15378"/>
        <dbReference type="ChEBI" id="CHEBI:30616"/>
        <dbReference type="ChEBI" id="CHEBI:60204"/>
        <dbReference type="ChEBI" id="CHEBI:60208"/>
        <dbReference type="ChEBI" id="CHEBI:456216"/>
        <dbReference type="EC" id="2.7.1.167"/>
    </reaction>
</comment>
<comment type="catalytic activity">
    <reaction evidence="1">
        <text>D-glycero-beta-D-manno-heptose 1-phosphate + ATP + H(+) = ADP-D-glycero-beta-D-manno-heptose + diphosphate</text>
        <dbReference type="Rhea" id="RHEA:27465"/>
        <dbReference type="ChEBI" id="CHEBI:15378"/>
        <dbReference type="ChEBI" id="CHEBI:30616"/>
        <dbReference type="ChEBI" id="CHEBI:33019"/>
        <dbReference type="ChEBI" id="CHEBI:59967"/>
        <dbReference type="ChEBI" id="CHEBI:61593"/>
        <dbReference type="EC" id="2.7.7.70"/>
    </reaction>
</comment>
<comment type="pathway">
    <text evidence="1">Nucleotide-sugar biosynthesis; ADP-L-glycero-beta-D-manno-heptose biosynthesis; ADP-L-glycero-beta-D-manno-heptose from D-glycero-beta-D-manno-heptose 7-phosphate: step 1/4.</text>
</comment>
<comment type="pathway">
    <text evidence="1">Nucleotide-sugar biosynthesis; ADP-L-glycero-beta-D-manno-heptose biosynthesis; ADP-L-glycero-beta-D-manno-heptose from D-glycero-beta-D-manno-heptose 7-phosphate: step 3/4.</text>
</comment>
<comment type="subunit">
    <text evidence="1">Homodimer.</text>
</comment>
<comment type="similarity">
    <text evidence="1">In the N-terminal section; belongs to the carbohydrate kinase PfkB family.</text>
</comment>
<comment type="similarity">
    <text evidence="1">In the C-terminal section; belongs to the cytidylyltransferase family.</text>
</comment>
<accession>B5BG11</accession>
<feature type="chain" id="PRO_1000185822" description="Bifunctional protein HldE">
    <location>
        <begin position="1"/>
        <end position="477"/>
    </location>
</feature>
<feature type="region of interest" description="Ribokinase">
    <location>
        <begin position="1"/>
        <end position="318"/>
    </location>
</feature>
<feature type="region of interest" description="Cytidylyltransferase">
    <location>
        <begin position="344"/>
        <end position="477"/>
    </location>
</feature>
<feature type="active site" evidence="1">
    <location>
        <position position="264"/>
    </location>
</feature>
<feature type="binding site" evidence="1">
    <location>
        <begin position="195"/>
        <end position="198"/>
    </location>
    <ligand>
        <name>ATP</name>
        <dbReference type="ChEBI" id="CHEBI:30616"/>
    </ligand>
</feature>
<name>HLDE_SALPK</name>
<sequence length="477" mass="51138">MKVNLPAFERAGVMVVGDVMLDRYWYGPTCRISPEAPVPVVKVNTVEERPGGAANVAMNIASLGANARLVGLTGIDDAARALSKTLAEVNVKCDFVSVPTHPTITKLRVLSRNQQLIRLDFEEGFEGVDPQPLHERINQALGSIGALVLSDYAKGALTSVQTMISLARQAGVPVLIDPKGTDFERYRGATLLTPNLSEFEAVAGKCKSEDELVERGMKLIADYDLSALLVTRSEQGMTLLQPNKAPLHMPTQAQEVYDVTGAGDTVIGVLAATLAAGNTLEEACYFANAAAGVVVGKLGTSTVSPIELENAVRGRADTGFGVMTEEELRQAVASARKRGEKVVMTNGVFDILHAGHVSYLANARKLGDRLIVAVNSDASTKRLKGESRPVNPLEQRMIVLGALESVDWIVSFEEDTPQRLIAGILPDLLVKGGDYKPEEIAGSEEVWANGGEVMVLNFEDGCSTTNIIKKIQTESEK</sequence>
<protein>
    <recommendedName>
        <fullName evidence="1">Bifunctional protein HldE</fullName>
    </recommendedName>
    <domain>
        <recommendedName>
            <fullName evidence="1">D-beta-D-heptose 7-phosphate kinase</fullName>
            <ecNumber evidence="1">2.7.1.167</ecNumber>
        </recommendedName>
        <alternativeName>
            <fullName evidence="1">D-beta-D-heptose 7-phosphotransferase</fullName>
        </alternativeName>
        <alternativeName>
            <fullName evidence="1">D-glycero-beta-D-manno-heptose-7-phosphate kinase</fullName>
        </alternativeName>
    </domain>
    <domain>
        <recommendedName>
            <fullName evidence="1">D-beta-D-heptose 1-phosphate adenylyltransferase</fullName>
            <ecNumber evidence="1">2.7.7.70</ecNumber>
        </recommendedName>
        <alternativeName>
            <fullName evidence="1">D-glycero-beta-D-manno-heptose 1-phosphate adenylyltransferase</fullName>
        </alternativeName>
    </domain>
</protein>
<keyword id="KW-0067">ATP-binding</keyword>
<keyword id="KW-0119">Carbohydrate metabolism</keyword>
<keyword id="KW-0418">Kinase</keyword>
<keyword id="KW-0511">Multifunctional enzyme</keyword>
<keyword id="KW-0547">Nucleotide-binding</keyword>
<keyword id="KW-0548">Nucleotidyltransferase</keyword>
<keyword id="KW-0808">Transferase</keyword>
<evidence type="ECO:0000255" key="1">
    <source>
        <dbReference type="HAMAP-Rule" id="MF_01603"/>
    </source>
</evidence>
<reference key="1">
    <citation type="journal article" date="2009" name="BMC Genomics">
        <title>Pseudogene accumulation in the evolutionary histories of Salmonella enterica serovars Paratyphi A and Typhi.</title>
        <authorList>
            <person name="Holt K.E."/>
            <person name="Thomson N.R."/>
            <person name="Wain J."/>
            <person name="Langridge G.C."/>
            <person name="Hasan R."/>
            <person name="Bhutta Z.A."/>
            <person name="Quail M.A."/>
            <person name="Norbertczak H."/>
            <person name="Walker D."/>
            <person name="Simmonds M."/>
            <person name="White B."/>
            <person name="Bason N."/>
            <person name="Mungall K."/>
            <person name="Dougan G."/>
            <person name="Parkhill J."/>
        </authorList>
    </citation>
    <scope>NUCLEOTIDE SEQUENCE [LARGE SCALE GENOMIC DNA]</scope>
    <source>
        <strain>AKU_12601</strain>
    </source>
</reference>
<gene>
    <name evidence="1" type="primary">hldE</name>
    <name type="ordered locus">SSPA2864</name>
</gene>
<organism>
    <name type="scientific">Salmonella paratyphi A (strain AKU_12601)</name>
    <dbReference type="NCBI Taxonomy" id="554290"/>
    <lineage>
        <taxon>Bacteria</taxon>
        <taxon>Pseudomonadati</taxon>
        <taxon>Pseudomonadota</taxon>
        <taxon>Gammaproteobacteria</taxon>
        <taxon>Enterobacterales</taxon>
        <taxon>Enterobacteriaceae</taxon>
        <taxon>Salmonella</taxon>
    </lineage>
</organism>
<dbReference type="EC" id="2.7.1.167" evidence="1"/>
<dbReference type="EC" id="2.7.7.70" evidence="1"/>
<dbReference type="EMBL" id="FM200053">
    <property type="protein sequence ID" value="CAR61111.1"/>
    <property type="molecule type" value="Genomic_DNA"/>
</dbReference>
<dbReference type="RefSeq" id="WP_000867681.1">
    <property type="nucleotide sequence ID" value="NC_011147.1"/>
</dbReference>
<dbReference type="SMR" id="B5BG11"/>
<dbReference type="KEGG" id="sek:SSPA2864"/>
<dbReference type="HOGENOM" id="CLU_021150_2_1_6"/>
<dbReference type="UniPathway" id="UPA00356">
    <property type="reaction ID" value="UER00437"/>
</dbReference>
<dbReference type="UniPathway" id="UPA00356">
    <property type="reaction ID" value="UER00439"/>
</dbReference>
<dbReference type="Proteomes" id="UP000001869">
    <property type="component" value="Chromosome"/>
</dbReference>
<dbReference type="GO" id="GO:0005829">
    <property type="term" value="C:cytosol"/>
    <property type="evidence" value="ECO:0007669"/>
    <property type="project" value="TreeGrafter"/>
</dbReference>
<dbReference type="GO" id="GO:0005524">
    <property type="term" value="F:ATP binding"/>
    <property type="evidence" value="ECO:0007669"/>
    <property type="project" value="UniProtKB-UniRule"/>
</dbReference>
<dbReference type="GO" id="GO:0033785">
    <property type="term" value="F:heptose 7-phosphate kinase activity"/>
    <property type="evidence" value="ECO:0007669"/>
    <property type="project" value="UniProtKB-UniRule"/>
</dbReference>
<dbReference type="GO" id="GO:0033786">
    <property type="term" value="F:heptose-1-phosphate adenylyltransferase activity"/>
    <property type="evidence" value="ECO:0007669"/>
    <property type="project" value="UniProtKB-UniRule"/>
</dbReference>
<dbReference type="GO" id="GO:0016773">
    <property type="term" value="F:phosphotransferase activity, alcohol group as acceptor"/>
    <property type="evidence" value="ECO:0007669"/>
    <property type="project" value="InterPro"/>
</dbReference>
<dbReference type="GO" id="GO:0097171">
    <property type="term" value="P:ADP-L-glycero-beta-D-manno-heptose biosynthetic process"/>
    <property type="evidence" value="ECO:0007669"/>
    <property type="project" value="UniProtKB-UniPathway"/>
</dbReference>
<dbReference type="CDD" id="cd01172">
    <property type="entry name" value="RfaE_like"/>
    <property type="match status" value="1"/>
</dbReference>
<dbReference type="FunFam" id="3.40.1190.20:FF:000002">
    <property type="entry name" value="Bifunctional protein HldE"/>
    <property type="match status" value="1"/>
</dbReference>
<dbReference type="FunFam" id="3.40.50.620:FF:000028">
    <property type="entry name" value="Bifunctional protein HldE"/>
    <property type="match status" value="1"/>
</dbReference>
<dbReference type="Gene3D" id="3.40.1190.20">
    <property type="match status" value="1"/>
</dbReference>
<dbReference type="Gene3D" id="3.40.50.620">
    <property type="entry name" value="HUPs"/>
    <property type="match status" value="1"/>
</dbReference>
<dbReference type="HAMAP" id="MF_01603">
    <property type="entry name" value="HldE"/>
    <property type="match status" value="1"/>
</dbReference>
<dbReference type="InterPro" id="IPR023030">
    <property type="entry name" value="Bifunc_HldE"/>
</dbReference>
<dbReference type="InterPro" id="IPR002173">
    <property type="entry name" value="Carboh/pur_kinase_PfkB_CS"/>
</dbReference>
<dbReference type="InterPro" id="IPR004821">
    <property type="entry name" value="Cyt_trans-like"/>
</dbReference>
<dbReference type="InterPro" id="IPR011611">
    <property type="entry name" value="PfkB_dom"/>
</dbReference>
<dbReference type="InterPro" id="IPR011913">
    <property type="entry name" value="RfaE_dom_I"/>
</dbReference>
<dbReference type="InterPro" id="IPR011914">
    <property type="entry name" value="RfaE_dom_II"/>
</dbReference>
<dbReference type="InterPro" id="IPR029056">
    <property type="entry name" value="Ribokinase-like"/>
</dbReference>
<dbReference type="InterPro" id="IPR014729">
    <property type="entry name" value="Rossmann-like_a/b/a_fold"/>
</dbReference>
<dbReference type="NCBIfam" id="TIGR00125">
    <property type="entry name" value="cyt_tran_rel"/>
    <property type="match status" value="1"/>
</dbReference>
<dbReference type="NCBIfam" id="NF008454">
    <property type="entry name" value="PRK11316.1"/>
    <property type="match status" value="1"/>
</dbReference>
<dbReference type="NCBIfam" id="TIGR02198">
    <property type="entry name" value="rfaE_dom_I"/>
    <property type="match status" value="1"/>
</dbReference>
<dbReference type="NCBIfam" id="TIGR02199">
    <property type="entry name" value="rfaE_dom_II"/>
    <property type="match status" value="1"/>
</dbReference>
<dbReference type="PANTHER" id="PTHR46969">
    <property type="entry name" value="BIFUNCTIONAL PROTEIN HLDE"/>
    <property type="match status" value="1"/>
</dbReference>
<dbReference type="PANTHER" id="PTHR46969:SF1">
    <property type="entry name" value="BIFUNCTIONAL PROTEIN HLDE"/>
    <property type="match status" value="1"/>
</dbReference>
<dbReference type="Pfam" id="PF01467">
    <property type="entry name" value="CTP_transf_like"/>
    <property type="match status" value="1"/>
</dbReference>
<dbReference type="Pfam" id="PF00294">
    <property type="entry name" value="PfkB"/>
    <property type="match status" value="1"/>
</dbReference>
<dbReference type="SUPFAM" id="SSF52374">
    <property type="entry name" value="Nucleotidylyl transferase"/>
    <property type="match status" value="1"/>
</dbReference>
<dbReference type="SUPFAM" id="SSF53613">
    <property type="entry name" value="Ribokinase-like"/>
    <property type="match status" value="1"/>
</dbReference>
<dbReference type="PROSITE" id="PS00583">
    <property type="entry name" value="PFKB_KINASES_1"/>
    <property type="match status" value="1"/>
</dbReference>